<feature type="chain" id="PRO_1000009764" description="dCTP deaminase, dUMP-forming">
    <location>
        <begin position="1"/>
        <end position="190"/>
    </location>
</feature>
<feature type="region of interest" description="Disordered" evidence="2">
    <location>
        <begin position="161"/>
        <end position="190"/>
    </location>
</feature>
<feature type="compositionally biased region" description="Polar residues" evidence="2">
    <location>
        <begin position="171"/>
        <end position="190"/>
    </location>
</feature>
<feature type="active site" description="Proton donor/acceptor" evidence="1">
    <location>
        <position position="129"/>
    </location>
</feature>
<feature type="binding site" evidence="1">
    <location>
        <begin position="101"/>
        <end position="106"/>
    </location>
    <ligand>
        <name>dCTP</name>
        <dbReference type="ChEBI" id="CHEBI:61481"/>
    </ligand>
</feature>
<feature type="binding site" evidence="1">
    <location>
        <position position="119"/>
    </location>
    <ligand>
        <name>dCTP</name>
        <dbReference type="ChEBI" id="CHEBI:61481"/>
    </ligand>
</feature>
<feature type="binding site" evidence="1">
    <location>
        <begin position="127"/>
        <end position="129"/>
    </location>
    <ligand>
        <name>dCTP</name>
        <dbReference type="ChEBI" id="CHEBI:61481"/>
    </ligand>
</feature>
<feature type="binding site" evidence="1">
    <location>
        <position position="148"/>
    </location>
    <ligand>
        <name>dCTP</name>
        <dbReference type="ChEBI" id="CHEBI:61481"/>
    </ligand>
</feature>
<feature type="binding site" evidence="1">
    <location>
        <position position="162"/>
    </location>
    <ligand>
        <name>dCTP</name>
        <dbReference type="ChEBI" id="CHEBI:61481"/>
    </ligand>
</feature>
<feature type="binding site" evidence="1">
    <location>
        <position position="174"/>
    </location>
    <ligand>
        <name>dCTP</name>
        <dbReference type="ChEBI" id="CHEBI:61481"/>
    </ligand>
</feature>
<feature type="site" description="Important for bifunctional activity" evidence="1">
    <location>
        <begin position="116"/>
        <end position="117"/>
    </location>
</feature>
<accession>A0PLM7</accession>
<proteinExistence type="inferred from homology"/>
<sequence length="190" mass="20643">MLLSDRDLRAEISAGRLGIDPFDDSLVQPSSVDVRLDCMFRVFNNTRYTHIDPAQRQDELTSAVEPTKGDPFVLHPGEFVLGSTLEIFSLPGDLAGRLEGKSSLGRLGLLTHSTAGFIDPGFSGHITLELSNVANLPITLWPGMKIGQLCILKLTSPSEHPYGSSGVGSKYQGQRGPTPSRSYQNFIRST</sequence>
<organism>
    <name type="scientific">Mycobacterium ulcerans (strain Agy99)</name>
    <dbReference type="NCBI Taxonomy" id="362242"/>
    <lineage>
        <taxon>Bacteria</taxon>
        <taxon>Bacillati</taxon>
        <taxon>Actinomycetota</taxon>
        <taxon>Actinomycetes</taxon>
        <taxon>Mycobacteriales</taxon>
        <taxon>Mycobacteriaceae</taxon>
        <taxon>Mycobacterium</taxon>
        <taxon>Mycobacterium ulcerans group</taxon>
    </lineage>
</organism>
<protein>
    <recommendedName>
        <fullName evidence="1">dCTP deaminase, dUMP-forming</fullName>
        <ecNumber evidence="1">3.5.4.30</ecNumber>
    </recommendedName>
    <alternativeName>
        <fullName evidence="1">Bifunctional dCTP deaminase:dUTPase</fullName>
    </alternativeName>
    <alternativeName>
        <fullName evidence="1">DCD-DUT</fullName>
    </alternativeName>
</protein>
<dbReference type="EC" id="3.5.4.30" evidence="1"/>
<dbReference type="EMBL" id="CP000325">
    <property type="protein sequence ID" value="ABL03246.1"/>
    <property type="molecule type" value="Genomic_DNA"/>
</dbReference>
<dbReference type="RefSeq" id="WP_011738871.1">
    <property type="nucleotide sequence ID" value="NC_008611.1"/>
</dbReference>
<dbReference type="SMR" id="A0PLM7"/>
<dbReference type="KEGG" id="mul:MUL_0560"/>
<dbReference type="eggNOG" id="COG0717">
    <property type="taxonomic scope" value="Bacteria"/>
</dbReference>
<dbReference type="HOGENOM" id="CLU_087476_2_0_11"/>
<dbReference type="UniPathway" id="UPA00610">
    <property type="reaction ID" value="UER00667"/>
</dbReference>
<dbReference type="Proteomes" id="UP000000765">
    <property type="component" value="Chromosome"/>
</dbReference>
<dbReference type="GO" id="GO:0033973">
    <property type="term" value="F:dCTP deaminase (dUMP-forming) activity"/>
    <property type="evidence" value="ECO:0007669"/>
    <property type="project" value="UniProtKB-UniRule"/>
</dbReference>
<dbReference type="GO" id="GO:0008829">
    <property type="term" value="F:dCTP deaminase activity"/>
    <property type="evidence" value="ECO:0007669"/>
    <property type="project" value="InterPro"/>
</dbReference>
<dbReference type="GO" id="GO:0000166">
    <property type="term" value="F:nucleotide binding"/>
    <property type="evidence" value="ECO:0007669"/>
    <property type="project" value="UniProtKB-KW"/>
</dbReference>
<dbReference type="GO" id="GO:0006226">
    <property type="term" value="P:dUMP biosynthetic process"/>
    <property type="evidence" value="ECO:0007669"/>
    <property type="project" value="UniProtKB-UniRule"/>
</dbReference>
<dbReference type="GO" id="GO:0006229">
    <property type="term" value="P:dUTP biosynthetic process"/>
    <property type="evidence" value="ECO:0007669"/>
    <property type="project" value="InterPro"/>
</dbReference>
<dbReference type="GO" id="GO:0015949">
    <property type="term" value="P:nucleobase-containing small molecule interconversion"/>
    <property type="evidence" value="ECO:0007669"/>
    <property type="project" value="TreeGrafter"/>
</dbReference>
<dbReference type="CDD" id="cd07557">
    <property type="entry name" value="trimeric_dUTPase"/>
    <property type="match status" value="1"/>
</dbReference>
<dbReference type="FunFam" id="2.70.40.10:FF:000005">
    <property type="entry name" value="dCTP deaminase, dUMP-forming"/>
    <property type="match status" value="1"/>
</dbReference>
<dbReference type="Gene3D" id="2.70.40.10">
    <property type="match status" value="1"/>
</dbReference>
<dbReference type="HAMAP" id="MF_00146">
    <property type="entry name" value="dCTP_deaminase"/>
    <property type="match status" value="1"/>
</dbReference>
<dbReference type="InterPro" id="IPR011962">
    <property type="entry name" value="dCTP_deaminase"/>
</dbReference>
<dbReference type="InterPro" id="IPR036157">
    <property type="entry name" value="dUTPase-like_sf"/>
</dbReference>
<dbReference type="InterPro" id="IPR033704">
    <property type="entry name" value="dUTPase_trimeric"/>
</dbReference>
<dbReference type="NCBIfam" id="TIGR02274">
    <property type="entry name" value="dCTP_deam"/>
    <property type="match status" value="1"/>
</dbReference>
<dbReference type="PANTHER" id="PTHR42680">
    <property type="entry name" value="DCTP DEAMINASE"/>
    <property type="match status" value="1"/>
</dbReference>
<dbReference type="PANTHER" id="PTHR42680:SF3">
    <property type="entry name" value="DCTP DEAMINASE"/>
    <property type="match status" value="1"/>
</dbReference>
<dbReference type="Pfam" id="PF22769">
    <property type="entry name" value="DCD"/>
    <property type="match status" value="1"/>
</dbReference>
<dbReference type="SUPFAM" id="SSF51283">
    <property type="entry name" value="dUTPase-like"/>
    <property type="match status" value="1"/>
</dbReference>
<comment type="function">
    <text evidence="1">Bifunctional enzyme that catalyzes both the deamination of dCTP to dUTP and the hydrolysis of dUTP to dUMP without releasing the toxic dUTP intermediate.</text>
</comment>
<comment type="catalytic activity">
    <reaction evidence="1">
        <text>dCTP + 2 H2O = dUMP + NH4(+) + diphosphate</text>
        <dbReference type="Rhea" id="RHEA:19205"/>
        <dbReference type="ChEBI" id="CHEBI:15377"/>
        <dbReference type="ChEBI" id="CHEBI:28938"/>
        <dbReference type="ChEBI" id="CHEBI:33019"/>
        <dbReference type="ChEBI" id="CHEBI:61481"/>
        <dbReference type="ChEBI" id="CHEBI:246422"/>
        <dbReference type="EC" id="3.5.4.30"/>
    </reaction>
</comment>
<comment type="pathway">
    <text evidence="1">Pyrimidine metabolism; dUMP biosynthesis; dUMP from dCTP: step 1/1.</text>
</comment>
<comment type="subunit">
    <text evidence="1">Homotrimer.</text>
</comment>
<comment type="similarity">
    <text evidence="1">Belongs to the dCTP deaminase family.</text>
</comment>
<gene>
    <name evidence="1" type="primary">dcd</name>
    <name type="ordered locus">MUL_0560</name>
</gene>
<evidence type="ECO:0000255" key="1">
    <source>
        <dbReference type="HAMAP-Rule" id="MF_00146"/>
    </source>
</evidence>
<evidence type="ECO:0000256" key="2">
    <source>
        <dbReference type="SAM" id="MobiDB-lite"/>
    </source>
</evidence>
<reference key="1">
    <citation type="journal article" date="2007" name="Genome Res.">
        <title>Reductive evolution and niche adaptation inferred from the genome of Mycobacterium ulcerans, the causative agent of Buruli ulcer.</title>
        <authorList>
            <person name="Stinear T.P."/>
            <person name="Seemann T."/>
            <person name="Pidot S."/>
            <person name="Frigui W."/>
            <person name="Reysset G."/>
            <person name="Garnier T."/>
            <person name="Meurice G."/>
            <person name="Simon D."/>
            <person name="Bouchier C."/>
            <person name="Ma L."/>
            <person name="Tichit M."/>
            <person name="Porter J.L."/>
            <person name="Ryan J."/>
            <person name="Johnson P.D.R."/>
            <person name="Davies J.K."/>
            <person name="Jenkin G.A."/>
            <person name="Small P.L.C."/>
            <person name="Jones L.M."/>
            <person name="Tekaia F."/>
            <person name="Laval F."/>
            <person name="Daffe M."/>
            <person name="Parkhill J."/>
            <person name="Cole S.T."/>
        </authorList>
    </citation>
    <scope>NUCLEOTIDE SEQUENCE [LARGE SCALE GENOMIC DNA]</scope>
    <source>
        <strain>Agy99</strain>
    </source>
</reference>
<keyword id="KW-0378">Hydrolase</keyword>
<keyword id="KW-0546">Nucleotide metabolism</keyword>
<keyword id="KW-0547">Nucleotide-binding</keyword>
<name>DCDB_MYCUA</name>